<proteinExistence type="inferred from homology"/>
<name>RECO_LACDB</name>
<keyword id="KW-0227">DNA damage</keyword>
<keyword id="KW-0233">DNA recombination</keyword>
<keyword id="KW-0234">DNA repair</keyword>
<protein>
    <recommendedName>
        <fullName evidence="1">DNA repair protein RecO</fullName>
    </recommendedName>
    <alternativeName>
        <fullName evidence="1">Recombination protein O</fullName>
    </alternativeName>
</protein>
<dbReference type="EMBL" id="CP000412">
    <property type="protein sequence ID" value="ABJ58701.1"/>
    <property type="molecule type" value="Genomic_DNA"/>
</dbReference>
<dbReference type="RefSeq" id="WP_011678362.1">
    <property type="nucleotide sequence ID" value="NC_008529.1"/>
</dbReference>
<dbReference type="SMR" id="Q04A21"/>
<dbReference type="KEGG" id="lbu:LBUL_1168"/>
<dbReference type="HOGENOM" id="CLU_066632_4_0_9"/>
<dbReference type="BioCyc" id="LDEL321956:LBUL_RS05465-MONOMER"/>
<dbReference type="GO" id="GO:0043590">
    <property type="term" value="C:bacterial nucleoid"/>
    <property type="evidence" value="ECO:0007669"/>
    <property type="project" value="TreeGrafter"/>
</dbReference>
<dbReference type="GO" id="GO:0006310">
    <property type="term" value="P:DNA recombination"/>
    <property type="evidence" value="ECO:0007669"/>
    <property type="project" value="UniProtKB-UniRule"/>
</dbReference>
<dbReference type="GO" id="GO:0006302">
    <property type="term" value="P:double-strand break repair"/>
    <property type="evidence" value="ECO:0007669"/>
    <property type="project" value="TreeGrafter"/>
</dbReference>
<dbReference type="Gene3D" id="2.40.50.140">
    <property type="entry name" value="Nucleic acid-binding proteins"/>
    <property type="match status" value="1"/>
</dbReference>
<dbReference type="Gene3D" id="1.20.1440.120">
    <property type="entry name" value="Recombination protein O, C-terminal domain"/>
    <property type="match status" value="1"/>
</dbReference>
<dbReference type="Gene3D" id="6.20.220.20">
    <property type="entry name" value="Recombination protein O, zinc-binding domain"/>
    <property type="match status" value="1"/>
</dbReference>
<dbReference type="HAMAP" id="MF_00201">
    <property type="entry name" value="RecO"/>
    <property type="match status" value="1"/>
</dbReference>
<dbReference type="InterPro" id="IPR037278">
    <property type="entry name" value="ARFGAP/RecO"/>
</dbReference>
<dbReference type="InterPro" id="IPR022572">
    <property type="entry name" value="DNA_rep/recomb_RecO_N"/>
</dbReference>
<dbReference type="InterPro" id="IPR012340">
    <property type="entry name" value="NA-bd_OB-fold"/>
</dbReference>
<dbReference type="InterPro" id="IPR003717">
    <property type="entry name" value="RecO"/>
</dbReference>
<dbReference type="InterPro" id="IPR042242">
    <property type="entry name" value="RecO_C"/>
</dbReference>
<dbReference type="NCBIfam" id="TIGR00613">
    <property type="entry name" value="reco"/>
    <property type="match status" value="1"/>
</dbReference>
<dbReference type="PANTHER" id="PTHR33991">
    <property type="entry name" value="DNA REPAIR PROTEIN RECO"/>
    <property type="match status" value="1"/>
</dbReference>
<dbReference type="PANTHER" id="PTHR33991:SF1">
    <property type="entry name" value="DNA REPAIR PROTEIN RECO"/>
    <property type="match status" value="1"/>
</dbReference>
<dbReference type="Pfam" id="PF02565">
    <property type="entry name" value="RecO_C"/>
    <property type="match status" value="1"/>
</dbReference>
<dbReference type="Pfam" id="PF11967">
    <property type="entry name" value="RecO_N"/>
    <property type="match status" value="1"/>
</dbReference>
<dbReference type="SUPFAM" id="SSF57863">
    <property type="entry name" value="ArfGap/RecO-like zinc finger"/>
    <property type="match status" value="1"/>
</dbReference>
<dbReference type="SUPFAM" id="SSF50249">
    <property type="entry name" value="Nucleic acid-binding proteins"/>
    <property type="match status" value="1"/>
</dbReference>
<organism>
    <name type="scientific">Lactobacillus delbrueckii subsp. bulgaricus (strain ATCC BAA-365 / Lb-18)</name>
    <dbReference type="NCBI Taxonomy" id="321956"/>
    <lineage>
        <taxon>Bacteria</taxon>
        <taxon>Bacillati</taxon>
        <taxon>Bacillota</taxon>
        <taxon>Bacilli</taxon>
        <taxon>Lactobacillales</taxon>
        <taxon>Lactobacillaceae</taxon>
        <taxon>Lactobacillus</taxon>
    </lineage>
</organism>
<evidence type="ECO:0000255" key="1">
    <source>
        <dbReference type="HAMAP-Rule" id="MF_00201"/>
    </source>
</evidence>
<reference key="1">
    <citation type="journal article" date="2006" name="Proc. Natl. Acad. Sci. U.S.A.">
        <title>Comparative genomics of the lactic acid bacteria.</title>
        <authorList>
            <person name="Makarova K.S."/>
            <person name="Slesarev A."/>
            <person name="Wolf Y.I."/>
            <person name="Sorokin A."/>
            <person name="Mirkin B."/>
            <person name="Koonin E.V."/>
            <person name="Pavlov A."/>
            <person name="Pavlova N."/>
            <person name="Karamychev V."/>
            <person name="Polouchine N."/>
            <person name="Shakhova V."/>
            <person name="Grigoriev I."/>
            <person name="Lou Y."/>
            <person name="Rohksar D."/>
            <person name="Lucas S."/>
            <person name="Huang K."/>
            <person name="Goodstein D.M."/>
            <person name="Hawkins T."/>
            <person name="Plengvidhya V."/>
            <person name="Welker D."/>
            <person name="Hughes J."/>
            <person name="Goh Y."/>
            <person name="Benson A."/>
            <person name="Baldwin K."/>
            <person name="Lee J.-H."/>
            <person name="Diaz-Muniz I."/>
            <person name="Dosti B."/>
            <person name="Smeianov V."/>
            <person name="Wechter W."/>
            <person name="Barabote R."/>
            <person name="Lorca G."/>
            <person name="Altermann E."/>
            <person name="Barrangou R."/>
            <person name="Ganesan B."/>
            <person name="Xie Y."/>
            <person name="Rawsthorne H."/>
            <person name="Tamir D."/>
            <person name="Parker C."/>
            <person name="Breidt F."/>
            <person name="Broadbent J.R."/>
            <person name="Hutkins R."/>
            <person name="O'Sullivan D."/>
            <person name="Steele J."/>
            <person name="Unlu G."/>
            <person name="Saier M.H. Jr."/>
            <person name="Klaenhammer T."/>
            <person name="Richardson P."/>
            <person name="Kozyavkin S."/>
            <person name="Weimer B.C."/>
            <person name="Mills D.A."/>
        </authorList>
    </citation>
    <scope>NUCLEOTIDE SEQUENCE [LARGE SCALE GENOMIC DNA]</scope>
    <source>
        <strain>ATCC BAA-365 / Lb-18</strain>
    </source>
</reference>
<feature type="chain" id="PRO_1000012134" description="DNA repair protein RecO">
    <location>
        <begin position="1"/>
        <end position="249"/>
    </location>
</feature>
<sequence length="249" mass="27626">MAADLLDVHGLLFKRQQYKEADLLAKLWTKELGIVTVIAKGGMRPKSQLAAAVLPFTEGTFSILTRYKGISQLRTYKKLSQHDELFTDLDKNAYLSYLFDLADHAFSEYQKLGGYYDLLLVAFNRIVAGQDPEIIAQIVQLQLLDAFGVAPQLGACVICGKEKGIFDYSIAAGGVVCSDHFRSVSRLHLSPKATALIRTLALLPISRLGEIQIGEDLKKESRRAIAQIYQATVDLHLPSLRFLNEVRGS</sequence>
<gene>
    <name evidence="1" type="primary">recO</name>
    <name type="ordered locus">LBUL_1168</name>
</gene>
<comment type="function">
    <text evidence="1">Involved in DNA repair and RecF pathway recombination.</text>
</comment>
<comment type="similarity">
    <text evidence="1">Belongs to the RecO family.</text>
</comment>
<accession>Q04A21</accession>